<reference key="1">
    <citation type="journal article" date="2005" name="Nat. Biotechnol.">
        <title>Complete genome sequence of the plant commensal Pseudomonas fluorescens Pf-5.</title>
        <authorList>
            <person name="Paulsen I.T."/>
            <person name="Press C.M."/>
            <person name="Ravel J."/>
            <person name="Kobayashi D.Y."/>
            <person name="Myers G.S.A."/>
            <person name="Mavrodi D.V."/>
            <person name="DeBoy R.T."/>
            <person name="Seshadri R."/>
            <person name="Ren Q."/>
            <person name="Madupu R."/>
            <person name="Dodson R.J."/>
            <person name="Durkin A.S."/>
            <person name="Brinkac L.M."/>
            <person name="Daugherty S.C."/>
            <person name="Sullivan S.A."/>
            <person name="Rosovitz M.J."/>
            <person name="Gwinn M.L."/>
            <person name="Zhou L."/>
            <person name="Schneider D.J."/>
            <person name="Cartinhour S.W."/>
            <person name="Nelson W.C."/>
            <person name="Weidman J."/>
            <person name="Watkins K."/>
            <person name="Tran K."/>
            <person name="Khouri H."/>
            <person name="Pierson E.A."/>
            <person name="Pierson L.S. III"/>
            <person name="Thomashow L.S."/>
            <person name="Loper J.E."/>
        </authorList>
    </citation>
    <scope>NUCLEOTIDE SEQUENCE [LARGE SCALE GENOMIC DNA]</scope>
    <source>
        <strain>ATCC BAA-477 / NRRL B-23932 / Pf-5</strain>
    </source>
</reference>
<gene>
    <name evidence="1" type="primary">glyQ</name>
    <name type="ordered locus">PFL_0014</name>
</gene>
<feature type="chain" id="PRO_1000047470" description="Glycine--tRNA ligase alpha subunit">
    <location>
        <begin position="1"/>
        <end position="317"/>
    </location>
</feature>
<dbReference type="EC" id="6.1.1.14" evidence="1"/>
<dbReference type="EMBL" id="CP000076">
    <property type="protein sequence ID" value="AAY95432.1"/>
    <property type="molecule type" value="Genomic_DNA"/>
</dbReference>
<dbReference type="RefSeq" id="WP_003177094.1">
    <property type="nucleotide sequence ID" value="NC_004129.6"/>
</dbReference>
<dbReference type="SMR" id="Q4KKR7"/>
<dbReference type="STRING" id="220664.PFL_0014"/>
<dbReference type="GeneID" id="98108540"/>
<dbReference type="KEGG" id="pfl:PFL_0014"/>
<dbReference type="eggNOG" id="COG0752">
    <property type="taxonomic scope" value="Bacteria"/>
</dbReference>
<dbReference type="HOGENOM" id="CLU_057066_1_0_6"/>
<dbReference type="Proteomes" id="UP000008540">
    <property type="component" value="Chromosome"/>
</dbReference>
<dbReference type="GO" id="GO:0005829">
    <property type="term" value="C:cytosol"/>
    <property type="evidence" value="ECO:0007669"/>
    <property type="project" value="TreeGrafter"/>
</dbReference>
<dbReference type="GO" id="GO:0005524">
    <property type="term" value="F:ATP binding"/>
    <property type="evidence" value="ECO:0007669"/>
    <property type="project" value="UniProtKB-UniRule"/>
</dbReference>
<dbReference type="GO" id="GO:0004820">
    <property type="term" value="F:glycine-tRNA ligase activity"/>
    <property type="evidence" value="ECO:0007669"/>
    <property type="project" value="UniProtKB-UniRule"/>
</dbReference>
<dbReference type="GO" id="GO:0006426">
    <property type="term" value="P:glycyl-tRNA aminoacylation"/>
    <property type="evidence" value="ECO:0007669"/>
    <property type="project" value="UniProtKB-UniRule"/>
</dbReference>
<dbReference type="CDD" id="cd00733">
    <property type="entry name" value="GlyRS_alpha_core"/>
    <property type="match status" value="1"/>
</dbReference>
<dbReference type="FunFam" id="3.30.930.10:FF:000006">
    <property type="entry name" value="Glycine--tRNA ligase alpha subunit"/>
    <property type="match status" value="1"/>
</dbReference>
<dbReference type="Gene3D" id="3.30.930.10">
    <property type="entry name" value="Bira Bifunctional Protein, Domain 2"/>
    <property type="match status" value="1"/>
</dbReference>
<dbReference type="Gene3D" id="1.20.58.180">
    <property type="entry name" value="Class II aaRS and biotin synthetases, domain 2"/>
    <property type="match status" value="1"/>
</dbReference>
<dbReference type="HAMAP" id="MF_00254">
    <property type="entry name" value="Gly_tRNA_synth_alpha"/>
    <property type="match status" value="1"/>
</dbReference>
<dbReference type="InterPro" id="IPR045864">
    <property type="entry name" value="aa-tRNA-synth_II/BPL/LPL"/>
</dbReference>
<dbReference type="InterPro" id="IPR006194">
    <property type="entry name" value="Gly-tRNA-synth_heterodimer"/>
</dbReference>
<dbReference type="InterPro" id="IPR002310">
    <property type="entry name" value="Gly-tRNA_ligase_asu"/>
</dbReference>
<dbReference type="NCBIfam" id="TIGR00388">
    <property type="entry name" value="glyQ"/>
    <property type="match status" value="1"/>
</dbReference>
<dbReference type="NCBIfam" id="NF006827">
    <property type="entry name" value="PRK09348.1"/>
    <property type="match status" value="1"/>
</dbReference>
<dbReference type="PANTHER" id="PTHR30075:SF2">
    <property type="entry name" value="GLYCINE--TRNA LIGASE, CHLOROPLASTIC_MITOCHONDRIAL 2"/>
    <property type="match status" value="1"/>
</dbReference>
<dbReference type="PANTHER" id="PTHR30075">
    <property type="entry name" value="GLYCYL-TRNA SYNTHETASE"/>
    <property type="match status" value="1"/>
</dbReference>
<dbReference type="Pfam" id="PF02091">
    <property type="entry name" value="tRNA-synt_2e"/>
    <property type="match status" value="1"/>
</dbReference>
<dbReference type="PRINTS" id="PR01044">
    <property type="entry name" value="TRNASYNTHGA"/>
</dbReference>
<dbReference type="SUPFAM" id="SSF55681">
    <property type="entry name" value="Class II aaRS and biotin synthetases"/>
    <property type="match status" value="1"/>
</dbReference>
<dbReference type="PROSITE" id="PS50861">
    <property type="entry name" value="AA_TRNA_LIGASE_II_GLYAB"/>
    <property type="match status" value="1"/>
</dbReference>
<comment type="catalytic activity">
    <reaction evidence="1">
        <text>tRNA(Gly) + glycine + ATP = glycyl-tRNA(Gly) + AMP + diphosphate</text>
        <dbReference type="Rhea" id="RHEA:16013"/>
        <dbReference type="Rhea" id="RHEA-COMP:9664"/>
        <dbReference type="Rhea" id="RHEA-COMP:9683"/>
        <dbReference type="ChEBI" id="CHEBI:30616"/>
        <dbReference type="ChEBI" id="CHEBI:33019"/>
        <dbReference type="ChEBI" id="CHEBI:57305"/>
        <dbReference type="ChEBI" id="CHEBI:78442"/>
        <dbReference type="ChEBI" id="CHEBI:78522"/>
        <dbReference type="ChEBI" id="CHEBI:456215"/>
        <dbReference type="EC" id="6.1.1.14"/>
    </reaction>
</comment>
<comment type="subunit">
    <text evidence="1">Tetramer of two alpha and two beta subunits.</text>
</comment>
<comment type="subcellular location">
    <subcellularLocation>
        <location evidence="1">Cytoplasm</location>
    </subcellularLocation>
</comment>
<comment type="similarity">
    <text evidence="1">Belongs to the class-II aminoacyl-tRNA synthetase family.</text>
</comment>
<name>SYGA_PSEF5</name>
<keyword id="KW-0030">Aminoacyl-tRNA synthetase</keyword>
<keyword id="KW-0067">ATP-binding</keyword>
<keyword id="KW-0963">Cytoplasm</keyword>
<keyword id="KW-0436">Ligase</keyword>
<keyword id="KW-0547">Nucleotide-binding</keyword>
<keyword id="KW-0648">Protein biosynthesis</keyword>
<organism>
    <name type="scientific">Pseudomonas fluorescens (strain ATCC BAA-477 / NRRL B-23932 / Pf-5)</name>
    <dbReference type="NCBI Taxonomy" id="220664"/>
    <lineage>
        <taxon>Bacteria</taxon>
        <taxon>Pseudomonadati</taxon>
        <taxon>Pseudomonadota</taxon>
        <taxon>Gammaproteobacteria</taxon>
        <taxon>Pseudomonadales</taxon>
        <taxon>Pseudomonadaceae</taxon>
        <taxon>Pseudomonas</taxon>
    </lineage>
</organism>
<evidence type="ECO:0000255" key="1">
    <source>
        <dbReference type="HAMAP-Rule" id="MF_00254"/>
    </source>
</evidence>
<sequence>MSQPTPAVRTFQDLILALQQYWAEQGCVVLQPYDMEVGAGTFHTATFLRAIGPETWNAAYVQPSRRPTDGRYGENPNRLQHYYQFQVVLKPNPENFQELYLGSLKHVGLDPLVHDIRFVEDNWESPTLGAWGLGWEVWLNGMEVTQFTYFQQAGGIECYPVTGEITYGLERLAMYLQGVDSVYDLVWADGPFGKVTYGDVFHQNEVEQSTYNFEHANVEKLFELFDFYESEAKRLIELDQPLPLPSYEMVLKASHTFNLLDARRAISVTARQQYILRVRTLARSVAQAYLLARAKLGFPMATPDLRDEVLAKLEAAQ</sequence>
<proteinExistence type="inferred from homology"/>
<accession>Q4KKR7</accession>
<protein>
    <recommendedName>
        <fullName evidence="1">Glycine--tRNA ligase alpha subunit</fullName>
        <ecNumber evidence="1">6.1.1.14</ecNumber>
    </recommendedName>
    <alternativeName>
        <fullName evidence="1">Glycyl-tRNA synthetase alpha subunit</fullName>
        <shortName evidence="1">GlyRS</shortName>
    </alternativeName>
</protein>